<name>NTPP_NITHX</name>
<accession>Q1QRY3</accession>
<proteinExistence type="inferred from homology"/>
<comment type="function">
    <text evidence="1">Nucleoside triphosphate pyrophosphatase. May have a dual role in cell division arrest and in preventing the incorporation of modified nucleotides into cellular nucleic acids.</text>
</comment>
<comment type="catalytic activity">
    <reaction evidence="1">
        <text>a ribonucleoside 5'-triphosphate + H2O = a ribonucleoside 5'-phosphate + diphosphate + H(+)</text>
        <dbReference type="Rhea" id="RHEA:23996"/>
        <dbReference type="ChEBI" id="CHEBI:15377"/>
        <dbReference type="ChEBI" id="CHEBI:15378"/>
        <dbReference type="ChEBI" id="CHEBI:33019"/>
        <dbReference type="ChEBI" id="CHEBI:58043"/>
        <dbReference type="ChEBI" id="CHEBI:61557"/>
        <dbReference type="EC" id="3.6.1.9"/>
    </reaction>
</comment>
<comment type="catalytic activity">
    <reaction evidence="1">
        <text>a 2'-deoxyribonucleoside 5'-triphosphate + H2O = a 2'-deoxyribonucleoside 5'-phosphate + diphosphate + H(+)</text>
        <dbReference type="Rhea" id="RHEA:44644"/>
        <dbReference type="ChEBI" id="CHEBI:15377"/>
        <dbReference type="ChEBI" id="CHEBI:15378"/>
        <dbReference type="ChEBI" id="CHEBI:33019"/>
        <dbReference type="ChEBI" id="CHEBI:61560"/>
        <dbReference type="ChEBI" id="CHEBI:65317"/>
        <dbReference type="EC" id="3.6.1.9"/>
    </reaction>
</comment>
<comment type="cofactor">
    <cofactor evidence="1">
        <name>a divalent metal cation</name>
        <dbReference type="ChEBI" id="CHEBI:60240"/>
    </cofactor>
</comment>
<comment type="subcellular location">
    <subcellularLocation>
        <location evidence="1">Cytoplasm</location>
    </subcellularLocation>
</comment>
<comment type="similarity">
    <text evidence="1">Belongs to the Maf family.</text>
</comment>
<reference key="1">
    <citation type="submission" date="2006-03" db="EMBL/GenBank/DDBJ databases">
        <title>Complete sequence of chromosome of Nitrobacter hamburgensis X14.</title>
        <authorList>
            <consortium name="US DOE Joint Genome Institute"/>
            <person name="Copeland A."/>
            <person name="Lucas S."/>
            <person name="Lapidus A."/>
            <person name="Barry K."/>
            <person name="Detter J.C."/>
            <person name="Glavina del Rio T."/>
            <person name="Hammon N."/>
            <person name="Israni S."/>
            <person name="Dalin E."/>
            <person name="Tice H."/>
            <person name="Pitluck S."/>
            <person name="Chain P."/>
            <person name="Malfatti S."/>
            <person name="Shin M."/>
            <person name="Vergez L."/>
            <person name="Schmutz J."/>
            <person name="Larimer F."/>
            <person name="Land M."/>
            <person name="Hauser L."/>
            <person name="Kyrpides N."/>
            <person name="Ivanova N."/>
            <person name="Ward B."/>
            <person name="Arp D."/>
            <person name="Klotz M."/>
            <person name="Stein L."/>
            <person name="O'Mullan G."/>
            <person name="Starkenburg S."/>
            <person name="Sayavedra L."/>
            <person name="Poret-Peterson A.T."/>
            <person name="Gentry M.E."/>
            <person name="Bruce D."/>
            <person name="Richardson P."/>
        </authorList>
    </citation>
    <scope>NUCLEOTIDE SEQUENCE [LARGE SCALE GENOMIC DNA]</scope>
    <source>
        <strain>DSM 10229 / NCIMB 13809 / X14</strain>
    </source>
</reference>
<evidence type="ECO:0000255" key="1">
    <source>
        <dbReference type="HAMAP-Rule" id="MF_00528"/>
    </source>
</evidence>
<feature type="chain" id="PRO_0000267351" description="Nucleoside triphosphate pyrophosphatase">
    <location>
        <begin position="1"/>
        <end position="202"/>
    </location>
</feature>
<feature type="active site" description="Proton acceptor" evidence="1">
    <location>
        <position position="79"/>
    </location>
</feature>
<protein>
    <recommendedName>
        <fullName evidence="1">Nucleoside triphosphate pyrophosphatase</fullName>
        <ecNumber evidence="1">3.6.1.9</ecNumber>
    </recommendedName>
    <alternativeName>
        <fullName evidence="1">Nucleotide pyrophosphatase</fullName>
        <shortName evidence="1">Nucleotide PPase</shortName>
    </alternativeName>
</protein>
<gene>
    <name type="ordered locus">Nham_0113</name>
</gene>
<organism>
    <name type="scientific">Nitrobacter hamburgensis (strain DSM 10229 / NCIMB 13809 / X14)</name>
    <dbReference type="NCBI Taxonomy" id="323097"/>
    <lineage>
        <taxon>Bacteria</taxon>
        <taxon>Pseudomonadati</taxon>
        <taxon>Pseudomonadota</taxon>
        <taxon>Alphaproteobacteria</taxon>
        <taxon>Hyphomicrobiales</taxon>
        <taxon>Nitrobacteraceae</taxon>
        <taxon>Nitrobacter</taxon>
    </lineage>
</organism>
<sequence>MAVWREPKPLILASQSRVRQALLANAGLSFEAIPAAIDERAIQRSCGLTSGAEIAVRLACEKARYVSLRSPGRYVIGADQTLECDGRLFNKPDGRVGAAEHLRALSGRTHALHAAVAIVRDGRQLFEYVSVARMTMRELSEDTIEAYLNAAGDEVTASVGAYQLENLGVHLFSRVEGDHFSILGLPLLPLLAFLRSQGLLSL</sequence>
<dbReference type="EC" id="3.6.1.9" evidence="1"/>
<dbReference type="EMBL" id="CP000319">
    <property type="protein sequence ID" value="ABE61014.1"/>
    <property type="molecule type" value="Genomic_DNA"/>
</dbReference>
<dbReference type="RefSeq" id="WP_011508721.1">
    <property type="nucleotide sequence ID" value="NC_007964.1"/>
</dbReference>
<dbReference type="SMR" id="Q1QRY3"/>
<dbReference type="STRING" id="323097.Nham_0113"/>
<dbReference type="KEGG" id="nha:Nham_0113"/>
<dbReference type="eggNOG" id="COG0424">
    <property type="taxonomic scope" value="Bacteria"/>
</dbReference>
<dbReference type="HOGENOM" id="CLU_040416_1_1_5"/>
<dbReference type="OrthoDB" id="9813962at2"/>
<dbReference type="Proteomes" id="UP000001953">
    <property type="component" value="Chromosome"/>
</dbReference>
<dbReference type="GO" id="GO:0005737">
    <property type="term" value="C:cytoplasm"/>
    <property type="evidence" value="ECO:0007669"/>
    <property type="project" value="UniProtKB-SubCell"/>
</dbReference>
<dbReference type="GO" id="GO:0047429">
    <property type="term" value="F:nucleoside triphosphate diphosphatase activity"/>
    <property type="evidence" value="ECO:0007669"/>
    <property type="project" value="UniProtKB-EC"/>
</dbReference>
<dbReference type="GO" id="GO:0009117">
    <property type="term" value="P:nucleotide metabolic process"/>
    <property type="evidence" value="ECO:0007669"/>
    <property type="project" value="UniProtKB-KW"/>
</dbReference>
<dbReference type="CDD" id="cd00555">
    <property type="entry name" value="Maf"/>
    <property type="match status" value="1"/>
</dbReference>
<dbReference type="Gene3D" id="3.90.950.10">
    <property type="match status" value="1"/>
</dbReference>
<dbReference type="HAMAP" id="MF_00528">
    <property type="entry name" value="Maf"/>
    <property type="match status" value="1"/>
</dbReference>
<dbReference type="InterPro" id="IPR029001">
    <property type="entry name" value="ITPase-like_fam"/>
</dbReference>
<dbReference type="InterPro" id="IPR003697">
    <property type="entry name" value="Maf-like"/>
</dbReference>
<dbReference type="PANTHER" id="PTHR43213">
    <property type="entry name" value="BIFUNCTIONAL DTTP/UTP PYROPHOSPHATASE/METHYLTRANSFERASE PROTEIN-RELATED"/>
    <property type="match status" value="1"/>
</dbReference>
<dbReference type="PANTHER" id="PTHR43213:SF5">
    <property type="entry name" value="BIFUNCTIONAL DTTP_UTP PYROPHOSPHATASE_METHYLTRANSFERASE PROTEIN-RELATED"/>
    <property type="match status" value="1"/>
</dbReference>
<dbReference type="Pfam" id="PF02545">
    <property type="entry name" value="Maf"/>
    <property type="match status" value="1"/>
</dbReference>
<dbReference type="PIRSF" id="PIRSF006305">
    <property type="entry name" value="Maf"/>
    <property type="match status" value="1"/>
</dbReference>
<dbReference type="SUPFAM" id="SSF52972">
    <property type="entry name" value="ITPase-like"/>
    <property type="match status" value="1"/>
</dbReference>
<keyword id="KW-0963">Cytoplasm</keyword>
<keyword id="KW-0378">Hydrolase</keyword>
<keyword id="KW-0546">Nucleotide metabolism</keyword>
<keyword id="KW-1185">Reference proteome</keyword>